<dbReference type="EC" id="3.2.1.26"/>
<dbReference type="EMBL" id="U11033">
    <property type="protein sequence ID" value="AAA63802.1"/>
    <property type="molecule type" value="Genomic_DNA"/>
</dbReference>
<dbReference type="EMBL" id="AL050300">
    <property type="protein sequence ID" value="CAB43403.1"/>
    <property type="status" value="ALT_SEQ"/>
    <property type="molecule type" value="Genomic_DNA"/>
</dbReference>
<dbReference type="EMBL" id="CP002686">
    <property type="protein sequence ID" value="AEE78967.1"/>
    <property type="molecule type" value="Genomic_DNA"/>
</dbReference>
<dbReference type="EMBL" id="AK118343">
    <property type="protein sequence ID" value="BAC42957.1"/>
    <property type="molecule type" value="mRNA"/>
</dbReference>
<dbReference type="EMBL" id="DQ446760">
    <property type="protein sequence ID" value="ABE66012.1"/>
    <property type="molecule type" value="mRNA"/>
</dbReference>
<dbReference type="EMBL" id="DQ653148">
    <property type="protein sequence ID" value="ABK28599.1"/>
    <property type="status" value="ALT_SEQ"/>
    <property type="molecule type" value="mRNA"/>
</dbReference>
<dbReference type="PIR" id="T08439">
    <property type="entry name" value="T08439"/>
</dbReference>
<dbReference type="RefSeq" id="NP_190828.2">
    <molecule id="Q1PEF8-1"/>
    <property type="nucleotide sequence ID" value="NM_115120.4"/>
</dbReference>
<dbReference type="SMR" id="Q1PEF8"/>
<dbReference type="FunCoup" id="Q1PEF8">
    <property type="interactions" value="237"/>
</dbReference>
<dbReference type="STRING" id="3702.Q1PEF8"/>
<dbReference type="CAZy" id="GH32">
    <property type="family name" value="Glycoside Hydrolase Family 32"/>
</dbReference>
<dbReference type="GlyCosmos" id="Q1PEF8">
    <property type="glycosylation" value="5 sites, No reported glycans"/>
</dbReference>
<dbReference type="GlyGen" id="Q1PEF8">
    <property type="glycosylation" value="5 sites"/>
</dbReference>
<dbReference type="PaxDb" id="3702-AT3G52600.1"/>
<dbReference type="ProteomicsDB" id="247177">
    <molecule id="Q1PEF8-1"/>
</dbReference>
<dbReference type="EnsemblPlants" id="AT3G52600.1">
    <molecule id="Q1PEF8-1"/>
    <property type="protein sequence ID" value="AT3G52600.1"/>
    <property type="gene ID" value="AT3G52600"/>
</dbReference>
<dbReference type="GeneID" id="824426"/>
<dbReference type="Gramene" id="AT3G52600.1">
    <molecule id="Q1PEF8-1"/>
    <property type="protein sequence ID" value="AT3G52600.1"/>
    <property type="gene ID" value="AT3G52600"/>
</dbReference>
<dbReference type="KEGG" id="ath:AT3G52600"/>
<dbReference type="Araport" id="AT3G52600"/>
<dbReference type="TAIR" id="AT3G52600">
    <property type="gene designation" value="CWINV2"/>
</dbReference>
<dbReference type="eggNOG" id="KOG0228">
    <property type="taxonomic scope" value="Eukaryota"/>
</dbReference>
<dbReference type="InParanoid" id="Q1PEF8"/>
<dbReference type="OrthoDB" id="202537at2759"/>
<dbReference type="PhylomeDB" id="Q1PEF8"/>
<dbReference type="BioCyc" id="ARA:AT3G52600-MONOMER"/>
<dbReference type="PRO" id="PR:Q1PEF8"/>
<dbReference type="Proteomes" id="UP000006548">
    <property type="component" value="Chromosome 3"/>
</dbReference>
<dbReference type="ExpressionAtlas" id="Q1PEF8">
    <property type="expression patterns" value="baseline and differential"/>
</dbReference>
<dbReference type="GO" id="GO:0048046">
    <property type="term" value="C:apoplast"/>
    <property type="evidence" value="ECO:0007669"/>
    <property type="project" value="UniProtKB-SubCell"/>
</dbReference>
<dbReference type="GO" id="GO:0004564">
    <property type="term" value="F:beta-fructofuranosidase activity"/>
    <property type="evidence" value="ECO:0007669"/>
    <property type="project" value="UniProtKB-EC"/>
</dbReference>
<dbReference type="GO" id="GO:0005975">
    <property type="term" value="P:carbohydrate metabolic process"/>
    <property type="evidence" value="ECO:0007669"/>
    <property type="project" value="InterPro"/>
</dbReference>
<dbReference type="GO" id="GO:0048481">
    <property type="term" value="P:plant ovule development"/>
    <property type="evidence" value="ECO:0000315"/>
    <property type="project" value="TAIR"/>
</dbReference>
<dbReference type="CDD" id="cd18624">
    <property type="entry name" value="GH32_Fruct1-like"/>
    <property type="match status" value="1"/>
</dbReference>
<dbReference type="FunFam" id="2.115.10.20:FF:000001">
    <property type="entry name" value="Beta-fructofuranosidase, insoluble isoenzyme CWINV1"/>
    <property type="match status" value="1"/>
</dbReference>
<dbReference type="FunFam" id="2.60.120.560:FF:000002">
    <property type="entry name" value="Beta-fructofuranosidase, insoluble isoenzyme CWINV1"/>
    <property type="match status" value="1"/>
</dbReference>
<dbReference type="Gene3D" id="2.60.120.560">
    <property type="entry name" value="Exo-inulinase, domain 1"/>
    <property type="match status" value="1"/>
</dbReference>
<dbReference type="Gene3D" id="2.115.10.20">
    <property type="entry name" value="Glycosyl hydrolase domain, family 43"/>
    <property type="match status" value="1"/>
</dbReference>
<dbReference type="InterPro" id="IPR013320">
    <property type="entry name" value="ConA-like_dom_sf"/>
</dbReference>
<dbReference type="InterPro" id="IPR050551">
    <property type="entry name" value="Fructan_Metab_Enzymes"/>
</dbReference>
<dbReference type="InterPro" id="IPR001362">
    <property type="entry name" value="Glyco_hydro_32"/>
</dbReference>
<dbReference type="InterPro" id="IPR018053">
    <property type="entry name" value="Glyco_hydro_32_AS"/>
</dbReference>
<dbReference type="InterPro" id="IPR013189">
    <property type="entry name" value="Glyco_hydro_32_C"/>
</dbReference>
<dbReference type="InterPro" id="IPR013148">
    <property type="entry name" value="Glyco_hydro_32_N"/>
</dbReference>
<dbReference type="InterPro" id="IPR023296">
    <property type="entry name" value="Glyco_hydro_beta-prop_sf"/>
</dbReference>
<dbReference type="PANTHER" id="PTHR31953">
    <property type="entry name" value="BETA-FRUCTOFURANOSIDASE, INSOLUBLE ISOENZYME CWINV1-RELATED"/>
    <property type="match status" value="1"/>
</dbReference>
<dbReference type="Pfam" id="PF08244">
    <property type="entry name" value="Glyco_hydro_32C"/>
    <property type="match status" value="1"/>
</dbReference>
<dbReference type="Pfam" id="PF00251">
    <property type="entry name" value="Glyco_hydro_32N"/>
    <property type="match status" value="1"/>
</dbReference>
<dbReference type="SMART" id="SM00640">
    <property type="entry name" value="Glyco_32"/>
    <property type="match status" value="1"/>
</dbReference>
<dbReference type="SUPFAM" id="SSF75005">
    <property type="entry name" value="Arabinanase/levansucrase/invertase"/>
    <property type="match status" value="1"/>
</dbReference>
<dbReference type="SUPFAM" id="SSF49899">
    <property type="entry name" value="Concanavalin A-like lectins/glucanases"/>
    <property type="match status" value="1"/>
</dbReference>
<dbReference type="PROSITE" id="PS00609">
    <property type="entry name" value="GLYCOSYL_HYDROL_F32"/>
    <property type="match status" value="1"/>
</dbReference>
<evidence type="ECO:0000250" key="1"/>
<evidence type="ECO:0000255" key="2"/>
<evidence type="ECO:0000255" key="3">
    <source>
        <dbReference type="PROSITE-ProRule" id="PRU10067"/>
    </source>
</evidence>
<evidence type="ECO:0000269" key="4">
    <source>
    </source>
</evidence>
<evidence type="ECO:0000269" key="5">
    <source>
    </source>
</evidence>
<evidence type="ECO:0000305" key="6"/>
<name>INV2_ARATH</name>
<keyword id="KW-0025">Alternative splicing</keyword>
<keyword id="KW-0052">Apoplast</keyword>
<keyword id="KW-0134">Cell wall</keyword>
<keyword id="KW-1015">Disulfide bond</keyword>
<keyword id="KW-0325">Glycoprotein</keyword>
<keyword id="KW-0326">Glycosidase</keyword>
<keyword id="KW-0378">Hydrolase</keyword>
<keyword id="KW-1185">Reference proteome</keyword>
<keyword id="KW-0964">Secreted</keyword>
<keyword id="KW-0732">Signal</keyword>
<accession>Q1PEF8</accession>
<accession>A0MF24</accession>
<accession>Q38801</accession>
<accession>Q8GXA3</accession>
<accession>Q9SVE0</accession>
<organism>
    <name type="scientific">Arabidopsis thaliana</name>
    <name type="common">Mouse-ear cress</name>
    <dbReference type="NCBI Taxonomy" id="3702"/>
    <lineage>
        <taxon>Eukaryota</taxon>
        <taxon>Viridiplantae</taxon>
        <taxon>Streptophyta</taxon>
        <taxon>Embryophyta</taxon>
        <taxon>Tracheophyta</taxon>
        <taxon>Spermatophyta</taxon>
        <taxon>Magnoliopsida</taxon>
        <taxon>eudicotyledons</taxon>
        <taxon>Gunneridae</taxon>
        <taxon>Pentapetalae</taxon>
        <taxon>rosids</taxon>
        <taxon>malvids</taxon>
        <taxon>Brassicales</taxon>
        <taxon>Brassicaceae</taxon>
        <taxon>Camelineae</taxon>
        <taxon>Arabidopsis</taxon>
    </lineage>
</organism>
<feature type="signal peptide" evidence="2">
    <location>
        <begin position="1"/>
        <end position="25"/>
    </location>
</feature>
<feature type="chain" id="PRO_0000348348" description="Beta-fructofuranosidase, insoluble isoenzyme CWINV2">
    <location>
        <begin position="26"/>
        <end position="590"/>
    </location>
</feature>
<feature type="active site" evidence="3">
    <location>
        <position position="62"/>
    </location>
</feature>
<feature type="binding site" evidence="1">
    <location>
        <begin position="59"/>
        <end position="62"/>
    </location>
    <ligand>
        <name>substrate</name>
    </ligand>
</feature>
<feature type="binding site" evidence="1">
    <location>
        <position position="78"/>
    </location>
    <ligand>
        <name>substrate</name>
    </ligand>
</feature>
<feature type="binding site" evidence="1">
    <location>
        <position position="86"/>
    </location>
    <ligand>
        <name>substrate</name>
    </ligand>
</feature>
<feature type="binding site" evidence="1">
    <location>
        <begin position="121"/>
        <end position="122"/>
    </location>
    <ligand>
        <name>substrate</name>
    </ligand>
</feature>
<feature type="binding site" evidence="1">
    <location>
        <begin position="185"/>
        <end position="186"/>
    </location>
    <ligand>
        <name>substrate</name>
    </ligand>
</feature>
<feature type="binding site" evidence="1">
    <location>
        <position position="241"/>
    </location>
    <ligand>
        <name>substrate</name>
    </ligand>
</feature>
<feature type="binding site" evidence="1">
    <location>
        <position position="275"/>
    </location>
    <ligand>
        <name>substrate</name>
    </ligand>
</feature>
<feature type="glycosylation site" description="N-linked (GlcNAc...) asparagine" evidence="2">
    <location>
        <position position="118"/>
    </location>
</feature>
<feature type="glycosylation site" description="N-linked (GlcNAc...) asparagine" evidence="2">
    <location>
        <position position="143"/>
    </location>
</feature>
<feature type="glycosylation site" description="N-linked (GlcNAc...) asparagine" evidence="6">
    <location>
        <position position="180"/>
    </location>
</feature>
<feature type="glycosylation site" description="N-linked (GlcNAc...) asparagine" evidence="6">
    <location>
        <position position="335"/>
    </location>
</feature>
<feature type="glycosylation site" description="N-linked (GlcNAc...) asparagine" evidence="2">
    <location>
        <position position="564"/>
    </location>
</feature>
<feature type="disulfide bond" evidence="1">
    <location>
        <begin position="435"/>
        <end position="483"/>
    </location>
</feature>
<feature type="sequence conflict" description="In Ref. 1; AAA63802." evidence="6" ref="1">
    <original>G</original>
    <variation>R</variation>
    <location>
        <position position="256"/>
    </location>
</feature>
<feature type="sequence conflict" description="In Ref. 4; BAC42957." evidence="6" ref="4">
    <original>G</original>
    <variation>S</variation>
    <location>
        <position position="298"/>
    </location>
</feature>
<feature type="sequence conflict" description="In Ref. 5; ABK28599." evidence="6" ref="5">
    <original>K</original>
    <variation>KG</variation>
    <location>
        <position position="590"/>
    </location>
</feature>
<comment type="catalytic activity">
    <reaction evidence="3">
        <text>Hydrolysis of terminal non-reducing beta-D-fructofuranoside residues in beta-D-fructofuranosides.</text>
        <dbReference type="EC" id="3.2.1.26"/>
    </reaction>
</comment>
<comment type="subcellular location">
    <subcellularLocation>
        <location evidence="6">Secreted</location>
        <location evidence="6">Extracellular space</location>
        <location evidence="6">Apoplast</location>
    </subcellularLocation>
    <subcellularLocation>
        <location evidence="6">Secreted</location>
        <location evidence="6">Cell wall</location>
    </subcellularLocation>
    <text evidence="6">Associated to the cell wall.</text>
</comment>
<comment type="alternative products">
    <event type="alternative splicing"/>
    <isoform>
        <id>Q1PEF8-1</id>
        <name>1</name>
        <sequence type="displayed"/>
    </isoform>
    <text>A number of isoforms are produced. According to EST sequences.</text>
</comment>
<comment type="tissue specificity">
    <text evidence="4 5">Expressed in flowers, and seeds.</text>
</comment>
<comment type="induction">
    <text evidence="5">By aeroponic growth condition, darkness, sucrose, glucose and mannitol.</text>
</comment>
<comment type="similarity">
    <text evidence="6">Belongs to the glycosyl hydrolase 32 family.</text>
</comment>
<comment type="sequence caution" evidence="6">
    <conflict type="erroneous termination">
        <sequence resource="EMBL-CDS" id="ABK28599"/>
    </conflict>
    <text>Extended C-terminus.</text>
</comment>
<comment type="sequence caution" evidence="6">
    <conflict type="erroneous gene model prediction">
        <sequence resource="EMBL-CDS" id="CAB43403"/>
    </conflict>
</comment>
<gene>
    <name type="primary">CWINV2</name>
    <name type="synonym">BFRUCT2</name>
    <name type="ordered locus">At3g52600</name>
    <name type="ORF">F22O6.20</name>
    <name type="ORF">F3C22.4</name>
</gene>
<protein>
    <recommendedName>
        <fullName>Beta-fructofuranosidase, insoluble isoenzyme CWINV2</fullName>
        <ecNumber>3.2.1.26</ecNumber>
    </recommendedName>
    <alternativeName>
        <fullName>Cell wall beta-fructosidase 2</fullName>
        <shortName>AtbetaFRUCT2</shortName>
    </alternativeName>
    <alternativeName>
        <fullName>Cell wall invertase 2</fullName>
        <shortName>AtcwINV2</shortName>
    </alternativeName>
    <alternativeName>
        <fullName>Sucrose hydrolase 2</fullName>
    </alternativeName>
</protein>
<reference key="1">
    <citation type="submission" date="1994-06" db="EMBL/GenBank/DDBJ databases">
        <title>A second cell wall invertase encoding gene in Arabidopsis thaliana.</title>
        <authorList>
            <person name="Mercier R.W."/>
            <person name="Gogarten J."/>
        </authorList>
    </citation>
    <scope>NUCLEOTIDE SEQUENCE [GENOMIC DNA]</scope>
    <source>
        <strain>cv. Columbia</strain>
    </source>
</reference>
<reference key="2">
    <citation type="journal article" date="2000" name="Nature">
        <title>Sequence and analysis of chromosome 3 of the plant Arabidopsis thaliana.</title>
        <authorList>
            <person name="Salanoubat M."/>
            <person name="Lemcke K."/>
            <person name="Rieger M."/>
            <person name="Ansorge W."/>
            <person name="Unseld M."/>
            <person name="Fartmann B."/>
            <person name="Valle G."/>
            <person name="Bloecker H."/>
            <person name="Perez-Alonso M."/>
            <person name="Obermaier B."/>
            <person name="Delseny M."/>
            <person name="Boutry M."/>
            <person name="Grivell L.A."/>
            <person name="Mache R."/>
            <person name="Puigdomenech P."/>
            <person name="De Simone V."/>
            <person name="Choisne N."/>
            <person name="Artiguenave F."/>
            <person name="Robert C."/>
            <person name="Brottier P."/>
            <person name="Wincker P."/>
            <person name="Cattolico L."/>
            <person name="Weissenbach J."/>
            <person name="Saurin W."/>
            <person name="Quetier F."/>
            <person name="Schaefer M."/>
            <person name="Mueller-Auer S."/>
            <person name="Gabel C."/>
            <person name="Fuchs M."/>
            <person name="Benes V."/>
            <person name="Wurmbach E."/>
            <person name="Drzonek H."/>
            <person name="Erfle H."/>
            <person name="Jordan N."/>
            <person name="Bangert S."/>
            <person name="Wiedelmann R."/>
            <person name="Kranz H."/>
            <person name="Voss H."/>
            <person name="Holland R."/>
            <person name="Brandt P."/>
            <person name="Nyakatura G."/>
            <person name="Vezzi A."/>
            <person name="D'Angelo M."/>
            <person name="Pallavicini A."/>
            <person name="Toppo S."/>
            <person name="Simionati B."/>
            <person name="Conrad A."/>
            <person name="Hornischer K."/>
            <person name="Kauer G."/>
            <person name="Loehnert T.-H."/>
            <person name="Nordsiek G."/>
            <person name="Reichelt J."/>
            <person name="Scharfe M."/>
            <person name="Schoen O."/>
            <person name="Bargues M."/>
            <person name="Terol J."/>
            <person name="Climent J."/>
            <person name="Navarro P."/>
            <person name="Collado C."/>
            <person name="Perez-Perez A."/>
            <person name="Ottenwaelder B."/>
            <person name="Duchemin D."/>
            <person name="Cooke R."/>
            <person name="Laudie M."/>
            <person name="Berger-Llauro C."/>
            <person name="Purnelle B."/>
            <person name="Masuy D."/>
            <person name="de Haan M."/>
            <person name="Maarse A.C."/>
            <person name="Alcaraz J.-P."/>
            <person name="Cottet A."/>
            <person name="Casacuberta E."/>
            <person name="Monfort A."/>
            <person name="Argiriou A."/>
            <person name="Flores M."/>
            <person name="Liguori R."/>
            <person name="Vitale D."/>
            <person name="Mannhaupt G."/>
            <person name="Haase D."/>
            <person name="Schoof H."/>
            <person name="Rudd S."/>
            <person name="Zaccaria P."/>
            <person name="Mewes H.-W."/>
            <person name="Mayer K.F.X."/>
            <person name="Kaul S."/>
            <person name="Town C.D."/>
            <person name="Koo H.L."/>
            <person name="Tallon L.J."/>
            <person name="Jenkins J."/>
            <person name="Rooney T."/>
            <person name="Rizzo M."/>
            <person name="Walts A."/>
            <person name="Utterback T."/>
            <person name="Fujii C.Y."/>
            <person name="Shea T.P."/>
            <person name="Creasy T.H."/>
            <person name="Haas B."/>
            <person name="Maiti R."/>
            <person name="Wu D."/>
            <person name="Peterson J."/>
            <person name="Van Aken S."/>
            <person name="Pai G."/>
            <person name="Militscher J."/>
            <person name="Sellers P."/>
            <person name="Gill J.E."/>
            <person name="Feldblyum T.V."/>
            <person name="Preuss D."/>
            <person name="Lin X."/>
            <person name="Nierman W.C."/>
            <person name="Salzberg S.L."/>
            <person name="White O."/>
            <person name="Venter J.C."/>
            <person name="Fraser C.M."/>
            <person name="Kaneko T."/>
            <person name="Nakamura Y."/>
            <person name="Sato S."/>
            <person name="Kato T."/>
            <person name="Asamizu E."/>
            <person name="Sasamoto S."/>
            <person name="Kimura T."/>
            <person name="Idesawa K."/>
            <person name="Kawashima K."/>
            <person name="Kishida Y."/>
            <person name="Kiyokawa C."/>
            <person name="Kohara M."/>
            <person name="Matsumoto M."/>
            <person name="Matsuno A."/>
            <person name="Muraki A."/>
            <person name="Nakayama S."/>
            <person name="Nakazaki N."/>
            <person name="Shinpo S."/>
            <person name="Takeuchi C."/>
            <person name="Wada T."/>
            <person name="Watanabe A."/>
            <person name="Yamada M."/>
            <person name="Yasuda M."/>
            <person name="Tabata S."/>
        </authorList>
    </citation>
    <scope>NUCLEOTIDE SEQUENCE [LARGE SCALE GENOMIC DNA]</scope>
    <source>
        <strain>cv. Columbia</strain>
    </source>
</reference>
<reference key="3">
    <citation type="journal article" date="2017" name="Plant J.">
        <title>Araport11: a complete reannotation of the Arabidopsis thaliana reference genome.</title>
        <authorList>
            <person name="Cheng C.Y."/>
            <person name="Krishnakumar V."/>
            <person name="Chan A.P."/>
            <person name="Thibaud-Nissen F."/>
            <person name="Schobel S."/>
            <person name="Town C.D."/>
        </authorList>
    </citation>
    <scope>GENOME REANNOTATION</scope>
    <source>
        <strain>cv. Columbia</strain>
    </source>
</reference>
<reference key="4">
    <citation type="journal article" date="2002" name="Science">
        <title>Functional annotation of a full-length Arabidopsis cDNA collection.</title>
        <authorList>
            <person name="Seki M."/>
            <person name="Narusaka M."/>
            <person name="Kamiya A."/>
            <person name="Ishida J."/>
            <person name="Satou M."/>
            <person name="Sakurai T."/>
            <person name="Nakajima M."/>
            <person name="Enju A."/>
            <person name="Akiyama K."/>
            <person name="Oono Y."/>
            <person name="Muramatsu M."/>
            <person name="Hayashizaki Y."/>
            <person name="Kawai J."/>
            <person name="Carninci P."/>
            <person name="Itoh M."/>
            <person name="Ishii Y."/>
            <person name="Arakawa T."/>
            <person name="Shibata K."/>
            <person name="Shinagawa A."/>
            <person name="Shinozaki K."/>
        </authorList>
    </citation>
    <scope>NUCLEOTIDE SEQUENCE [LARGE SCALE MRNA]</scope>
    <source>
        <strain>cv. Columbia</strain>
    </source>
</reference>
<reference key="5">
    <citation type="journal article" date="2006" name="Plant Biotechnol. J.">
        <title>Simultaneous high-throughput recombinational cloning of open reading frames in closed and open configurations.</title>
        <authorList>
            <person name="Underwood B.A."/>
            <person name="Vanderhaeghen R."/>
            <person name="Whitford R."/>
            <person name="Town C.D."/>
            <person name="Hilson P."/>
        </authorList>
    </citation>
    <scope>NUCLEOTIDE SEQUENCE [LARGE SCALE MRNA]</scope>
    <source>
        <strain>cv. Columbia</strain>
    </source>
</reference>
<reference key="6">
    <citation type="journal article" date="1998" name="Planta">
        <title>Expression of the Arabidopsis thaliana invertase gene family.</title>
        <authorList>
            <person name="Tymowska-Lalanne Z."/>
            <person name="Kreis M."/>
        </authorList>
    </citation>
    <scope>TISSUE SPECIFICITY</scope>
    <scope>INDUCTION</scope>
</reference>
<reference key="7">
    <citation type="journal article" date="2003" name="J. Exp. Bot.">
        <title>Roles of cell-wall invertases and monosaccharide transporters in the growth and development of Arabidopsis.</title>
        <authorList>
            <person name="Sherson S.M."/>
            <person name="Alford H.L."/>
            <person name="Forbes S.M."/>
            <person name="Wallace G."/>
            <person name="Smith S.M."/>
        </authorList>
    </citation>
    <scope>TISSUE SPECIFICITY</scope>
    <scope>GENE FAMILY</scope>
    <scope>NOMENCLATURE</scope>
</reference>
<sequence>MSAPKFGYVLLLIVLINISNNGVDAFHKVFKKLQSKSTSLESVSPLHRTAYHFQPPRHWINDPNAPMLYKGVYHLFYQYNPKGAVWGNIVWAHSVSKDLINWEALEPAIYPSKWFDINGTWSGSATHVPGKGPVILYTGITENQTQIQNYAIPQDLSDPYLKTWIKPDDNPIVKPDNGENGSAFRDPTTAWFNKKDGYWRMLVGSKRKNRGIAYMYKSRDFKKWVKSKRPIHSRKKTGMWECPDFFPVSVTDKKNGLDFSYDGPNAKHVLKVSLDLTRYEYYTLGTYDTKKDRYRPDGYTPDGWDGLRFDYGNYYASKTFFDDKTNRRILWGWANESDTVQDDTVKGWAGIQLIPRTILLDSSGKQLVFWPIEEIESLRGKNVQMTNQKMEMGQRFEVQGITPAQVDVDVTFNVGNLEKAEKFDESFATKPLELCNLKGSNVNGGVGPFGLITLATSDLEEYTPVFFRVFKDAASNKPKVLMCSDAKPSSLKKDTGTDAKERMYKPSFAGFVDVGLLDGKISLRSLIDHSVVESFGAKGKTVITSRVYPTKAVGEKAHLFVFNNGSQPVTVESLNAWNMQKPLKMNQGAK</sequence>
<proteinExistence type="evidence at transcript level"/>